<proteinExistence type="inferred from homology"/>
<comment type="cofactor">
    <cofactor evidence="1">
        <name>Zn(2+)</name>
        <dbReference type="ChEBI" id="CHEBI:29105"/>
    </cofactor>
    <text evidence="1">Binds 1 zinc ion.</text>
</comment>
<comment type="subcellular location">
    <subcellularLocation>
        <location evidence="1">Cytoplasm</location>
    </subcellularLocation>
</comment>
<comment type="similarity">
    <text evidence="1">Belongs to the SprT family.</text>
</comment>
<evidence type="ECO:0000255" key="1">
    <source>
        <dbReference type="HAMAP-Rule" id="MF_00745"/>
    </source>
</evidence>
<sequence length="145" mass="17231">MKLTNYVQEVSLADFGKPFHHKAYWNKRLKTTGGRFFPKDGHLDFNPRMLEENGELIFRKIVRHELCHYHLYFEGRGYHHKDRDFKDLLAQVNGLRYVPTSSKSKTNHHYSCQTCGQVYQRKRRINLSKYVCGNCHGKLIEKNQS</sequence>
<accession>Q8P1Y0</accession>
<keyword id="KW-0963">Cytoplasm</keyword>
<keyword id="KW-0479">Metal-binding</keyword>
<keyword id="KW-0862">Zinc</keyword>
<reference key="1">
    <citation type="journal article" date="2002" name="Proc. Natl. Acad. Sci. U.S.A.">
        <title>Genome sequence and comparative microarray analysis of serotype M18 group A Streptococcus strains associated with acute rheumatic fever outbreaks.</title>
        <authorList>
            <person name="Smoot J.C."/>
            <person name="Barbian K.D."/>
            <person name="Van Gompel J.J."/>
            <person name="Smoot L.M."/>
            <person name="Chaussee M.S."/>
            <person name="Sylva G.L."/>
            <person name="Sturdevant D.E."/>
            <person name="Ricklefs S.M."/>
            <person name="Porcella S.F."/>
            <person name="Parkins L.D."/>
            <person name="Beres S.B."/>
            <person name="Campbell D.S."/>
            <person name="Smith T.M."/>
            <person name="Zhang Q."/>
            <person name="Kapur V."/>
            <person name="Daly J.A."/>
            <person name="Veasy L.G."/>
            <person name="Musser J.M."/>
        </authorList>
    </citation>
    <scope>NUCLEOTIDE SEQUENCE [LARGE SCALE GENOMIC DNA]</scope>
    <source>
        <strain>MGAS8232</strain>
    </source>
</reference>
<gene>
    <name type="ordered locus">spyM18_0649</name>
</gene>
<feature type="chain" id="PRO_0000213313" description="Protein SprT-like">
    <location>
        <begin position="1"/>
        <end position="145"/>
    </location>
</feature>
<feature type="domain" description="SprT-like" evidence="1">
    <location>
        <begin position="4"/>
        <end position="140"/>
    </location>
</feature>
<feature type="active site" evidence="1">
    <location>
        <position position="65"/>
    </location>
</feature>
<feature type="binding site" evidence="1">
    <location>
        <position position="64"/>
    </location>
    <ligand>
        <name>Zn(2+)</name>
        <dbReference type="ChEBI" id="CHEBI:29105"/>
    </ligand>
</feature>
<feature type="binding site" evidence="1">
    <location>
        <position position="68"/>
    </location>
    <ligand>
        <name>Zn(2+)</name>
        <dbReference type="ChEBI" id="CHEBI:29105"/>
    </ligand>
</feature>
<organism>
    <name type="scientific">Streptococcus pyogenes serotype M18 (strain MGAS8232)</name>
    <dbReference type="NCBI Taxonomy" id="186103"/>
    <lineage>
        <taxon>Bacteria</taxon>
        <taxon>Bacillati</taxon>
        <taxon>Bacillota</taxon>
        <taxon>Bacilli</taxon>
        <taxon>Lactobacillales</taxon>
        <taxon>Streptococcaceae</taxon>
        <taxon>Streptococcus</taxon>
    </lineage>
</organism>
<dbReference type="EMBL" id="AE009949">
    <property type="protein sequence ID" value="AAL97331.1"/>
    <property type="molecule type" value="Genomic_DNA"/>
</dbReference>
<dbReference type="RefSeq" id="WP_011017529.1">
    <property type="nucleotide sequence ID" value="NC_003485.1"/>
</dbReference>
<dbReference type="KEGG" id="spm:spyM18_0649"/>
<dbReference type="HOGENOM" id="CLU_123820_0_0_9"/>
<dbReference type="GO" id="GO:0005737">
    <property type="term" value="C:cytoplasm"/>
    <property type="evidence" value="ECO:0007669"/>
    <property type="project" value="UniProtKB-SubCell"/>
</dbReference>
<dbReference type="GO" id="GO:0008270">
    <property type="term" value="F:zinc ion binding"/>
    <property type="evidence" value="ECO:0007669"/>
    <property type="project" value="UniProtKB-UniRule"/>
</dbReference>
<dbReference type="GO" id="GO:0006950">
    <property type="term" value="P:response to stress"/>
    <property type="evidence" value="ECO:0007669"/>
    <property type="project" value="UniProtKB-ARBA"/>
</dbReference>
<dbReference type="HAMAP" id="MF_00745">
    <property type="entry name" value="SprT_like"/>
    <property type="match status" value="1"/>
</dbReference>
<dbReference type="InterPro" id="IPR006640">
    <property type="entry name" value="SprT-like_domain"/>
</dbReference>
<dbReference type="InterPro" id="IPR023524">
    <property type="entry name" value="Uncharacterised_SprT-like"/>
</dbReference>
<dbReference type="NCBIfam" id="NF003339">
    <property type="entry name" value="PRK04351.1"/>
    <property type="match status" value="1"/>
</dbReference>
<dbReference type="Pfam" id="PF10263">
    <property type="entry name" value="SprT-like"/>
    <property type="match status" value="1"/>
</dbReference>
<dbReference type="SMART" id="SM00731">
    <property type="entry name" value="SprT"/>
    <property type="match status" value="1"/>
</dbReference>
<name>SPRTL_STRP8</name>
<protein>
    <recommendedName>
        <fullName evidence="1">Protein SprT-like</fullName>
    </recommendedName>
</protein>